<protein>
    <recommendedName>
        <fullName evidence="14">Guanine nucleotide exchange protein SMCR8</fullName>
    </recommendedName>
    <alternativeName>
        <fullName evidence="16">Smith-Magenis syndrome chromosomal region candidate gene 8 protein</fullName>
    </alternativeName>
</protein>
<name>SMCR8_HUMAN</name>
<evidence type="ECO:0000250" key="1">
    <source>
        <dbReference type="UniProtKB" id="Q3UMB5"/>
    </source>
</evidence>
<evidence type="ECO:0000255" key="2">
    <source>
        <dbReference type="PROSITE-ProRule" id="PRU01178"/>
    </source>
</evidence>
<evidence type="ECO:0000256" key="3">
    <source>
        <dbReference type="SAM" id="MobiDB-lite"/>
    </source>
</evidence>
<evidence type="ECO:0000269" key="4">
    <source>
    </source>
</evidence>
<evidence type="ECO:0000269" key="5">
    <source>
    </source>
</evidence>
<evidence type="ECO:0000269" key="6">
    <source>
    </source>
</evidence>
<evidence type="ECO:0000269" key="7">
    <source>
    </source>
</evidence>
<evidence type="ECO:0000269" key="8">
    <source>
    </source>
</evidence>
<evidence type="ECO:0000269" key="9">
    <source>
    </source>
</evidence>
<evidence type="ECO:0000269" key="10">
    <source>
    </source>
</evidence>
<evidence type="ECO:0000269" key="11">
    <source>
    </source>
</evidence>
<evidence type="ECO:0000269" key="12">
    <source>
    </source>
</evidence>
<evidence type="ECO:0000303" key="13">
    <source>
    </source>
</evidence>
<evidence type="ECO:0000305" key="14"/>
<evidence type="ECO:0000305" key="15">
    <source>
    </source>
</evidence>
<evidence type="ECO:0000312" key="16">
    <source>
        <dbReference type="HGNC" id="HGNC:17921"/>
    </source>
</evidence>
<evidence type="ECO:0007744" key="17">
    <source>
        <dbReference type="PDB" id="6LT0"/>
    </source>
</evidence>
<evidence type="ECO:0007744" key="18">
    <source>
    </source>
</evidence>
<evidence type="ECO:0007744" key="19">
    <source>
    </source>
</evidence>
<evidence type="ECO:0007744" key="20">
    <source>
    </source>
</evidence>
<evidence type="ECO:0007744" key="21">
    <source>
    </source>
</evidence>
<evidence type="ECO:0007744" key="22">
    <source>
    </source>
</evidence>
<evidence type="ECO:0007829" key="23">
    <source>
        <dbReference type="PDB" id="6LT0"/>
    </source>
</evidence>
<evidence type="ECO:0007829" key="24">
    <source>
        <dbReference type="PDB" id="7EL6"/>
    </source>
</evidence>
<evidence type="ECO:0007829" key="25">
    <source>
        <dbReference type="PDB" id="7O2W"/>
    </source>
</evidence>
<proteinExistence type="evidence at protein level"/>
<feature type="chain" id="PRO_0000287469" description="Guanine nucleotide exchange protein SMCR8">
    <location>
        <begin position="1"/>
        <end position="937"/>
    </location>
</feature>
<feature type="domain" description="uDENN FLCN/SMCR8-type" evidence="2 15">
    <location>
        <begin position="48"/>
        <end position="220"/>
    </location>
</feature>
<feature type="domain" description="cDENN FLCN/SMCR8-type" evidence="2 15">
    <location>
        <begin position="318"/>
        <end position="835"/>
    </location>
</feature>
<feature type="domain" description="dDENN FLCN/SMCR8-type" evidence="2 15">
    <location>
        <begin position="844"/>
        <end position="910"/>
    </location>
</feature>
<feature type="region of interest" description="Required for the homodimerization of the C9orf72-SMCR8 complex" evidence="12">
    <location>
        <begin position="1"/>
        <end position="349"/>
    </location>
</feature>
<feature type="region of interest" description="Disordered" evidence="3">
    <location>
        <begin position="274"/>
        <end position="293"/>
    </location>
</feature>
<feature type="region of interest" description="Disordered" evidence="3">
    <location>
        <begin position="384"/>
        <end position="405"/>
    </location>
</feature>
<feature type="region of interest" description="Disordered" evidence="3">
    <location>
        <begin position="564"/>
        <end position="645"/>
    </location>
</feature>
<feature type="region of interest" description="Interacts with WDR41 within the C9orf72-SMCR8 complex" evidence="12">
    <location>
        <begin position="862"/>
        <end position="914"/>
    </location>
</feature>
<feature type="compositionally biased region" description="Polar residues" evidence="3">
    <location>
        <begin position="276"/>
        <end position="288"/>
    </location>
</feature>
<feature type="compositionally biased region" description="Polar residues" evidence="3">
    <location>
        <begin position="388"/>
        <end position="403"/>
    </location>
</feature>
<feature type="compositionally biased region" description="Polar residues" evidence="3">
    <location>
        <begin position="574"/>
        <end position="583"/>
    </location>
</feature>
<feature type="modified residue" description="Phosphoserine; by TBK1" evidence="7">
    <location>
        <position position="402"/>
    </location>
</feature>
<feature type="modified residue" description="Phosphoserine" evidence="22">
    <location>
        <position position="417"/>
    </location>
</feature>
<feature type="modified residue" description="Phosphoserine" evidence="21">
    <location>
        <position position="468"/>
    </location>
</feature>
<feature type="modified residue" description="Phosphoserine" evidence="18 21">
    <location>
        <position position="471"/>
    </location>
</feature>
<feature type="modified residue" description="Phosphoserine" evidence="22">
    <location>
        <position position="489"/>
    </location>
</feature>
<feature type="modified residue" description="Phosphoserine" evidence="21 22">
    <location>
        <position position="492"/>
    </location>
</feature>
<feature type="modified residue" description="Phosphoserine" evidence="19 20 21 22">
    <location>
        <position position="498"/>
    </location>
</feature>
<feature type="modified residue" description="Phosphoserine" evidence="22">
    <location>
        <position position="790"/>
    </location>
</feature>
<feature type="modified residue" description="Phosphothreonine; by TBK1" evidence="7">
    <location>
        <position position="796"/>
    </location>
</feature>
<feature type="splice variant" id="VSP_025487" description="In isoform 2." evidence="13">
    <location>
        <begin position="788"/>
        <end position="937"/>
    </location>
</feature>
<feature type="sequence variant" id="VAR_032309" description="In dbSNP:rs8080966." evidence="5">
    <original>P</original>
    <variation>L</variation>
    <location>
        <position position="524"/>
    </location>
</feature>
<feature type="sequence variant" id="VAR_032310" description="In dbSNP:rs1563632." evidence="5">
    <original>R</original>
    <variation>H</variation>
    <location>
        <position position="556"/>
    </location>
</feature>
<feature type="sequence variant" id="VAR_032311" description="In dbSNP:rs12449313.">
    <original>N</original>
    <variation>S</variation>
    <location>
        <position position="636"/>
    </location>
</feature>
<feature type="mutagenesis site" description="Loss of C9ORF72-SMCR8 complex-mediated stimulation of RAB8A and RAB11A GTPase activity.">
    <original>R</original>
    <variation>A</variation>
    <location>
        <position position="147"/>
    </location>
</feature>
<feature type="mutagenesis site" description="Impaired autophagosome maturation; when associated with A-796." evidence="7">
    <original>S</original>
    <variation>A</variation>
    <location>
        <position position="402"/>
    </location>
</feature>
<feature type="mutagenesis site" description="Phosphomimetic mutant; able to promote autophagosome maturation; when associated with D-796." evidence="7">
    <original>S</original>
    <variation>D</variation>
    <location>
        <position position="402"/>
    </location>
</feature>
<feature type="mutagenesis site" description="Impaired autophagosome maturation; when associated with A-402." evidence="7">
    <original>T</original>
    <variation>A</variation>
    <location>
        <position position="796"/>
    </location>
</feature>
<feature type="mutagenesis site" description="Phosphomimetic mutant; able to promote autophagosome maturation; when associated with D-402." evidence="7">
    <original>T</original>
    <variation>D</variation>
    <location>
        <position position="796"/>
    </location>
</feature>
<feature type="strand" evidence="23">
    <location>
        <begin position="60"/>
        <end position="63"/>
    </location>
</feature>
<feature type="strand" evidence="23">
    <location>
        <begin position="85"/>
        <end position="88"/>
    </location>
</feature>
<feature type="helix" evidence="23">
    <location>
        <begin position="97"/>
        <end position="100"/>
    </location>
</feature>
<feature type="strand" evidence="23">
    <location>
        <begin position="103"/>
        <end position="105"/>
    </location>
</feature>
<feature type="strand" evidence="25">
    <location>
        <begin position="111"/>
        <end position="113"/>
    </location>
</feature>
<feature type="strand" evidence="23">
    <location>
        <begin position="115"/>
        <end position="117"/>
    </location>
</feature>
<feature type="strand" evidence="23">
    <location>
        <begin position="130"/>
        <end position="137"/>
    </location>
</feature>
<feature type="strand" evidence="25">
    <location>
        <begin position="144"/>
        <end position="146"/>
    </location>
</feature>
<feature type="helix" evidence="25">
    <location>
        <begin position="147"/>
        <end position="149"/>
    </location>
</feature>
<feature type="strand" evidence="23">
    <location>
        <begin position="153"/>
        <end position="160"/>
    </location>
</feature>
<feature type="helix" evidence="23">
    <location>
        <begin position="162"/>
        <end position="166"/>
    </location>
</feature>
<feature type="helix" evidence="23">
    <location>
        <begin position="169"/>
        <end position="173"/>
    </location>
</feature>
<feature type="turn" evidence="23">
    <location>
        <begin position="174"/>
        <end position="179"/>
    </location>
</feature>
<feature type="helix" evidence="23">
    <location>
        <begin position="180"/>
        <end position="187"/>
    </location>
</feature>
<feature type="strand" evidence="25">
    <location>
        <begin position="215"/>
        <end position="219"/>
    </location>
</feature>
<feature type="helix" evidence="25">
    <location>
        <begin position="225"/>
        <end position="248"/>
    </location>
</feature>
<feature type="helix" evidence="25">
    <location>
        <begin position="315"/>
        <end position="330"/>
    </location>
</feature>
<feature type="helix" evidence="23">
    <location>
        <begin position="331"/>
        <end position="344"/>
    </location>
</feature>
<feature type="helix" evidence="23">
    <location>
        <begin position="350"/>
        <end position="364"/>
    </location>
</feature>
<feature type="helix" evidence="23">
    <location>
        <begin position="368"/>
        <end position="371"/>
    </location>
</feature>
<feature type="helix" evidence="23">
    <location>
        <begin position="702"/>
        <end position="714"/>
    </location>
</feature>
<feature type="strand" evidence="23">
    <location>
        <begin position="717"/>
        <end position="719"/>
    </location>
</feature>
<feature type="helix" evidence="23">
    <location>
        <begin position="721"/>
        <end position="729"/>
    </location>
</feature>
<feature type="strand" evidence="23">
    <location>
        <begin position="732"/>
        <end position="736"/>
    </location>
</feature>
<feature type="helix" evidence="23">
    <location>
        <begin position="740"/>
        <end position="750"/>
    </location>
</feature>
<feature type="helix" evidence="23">
    <location>
        <begin position="751"/>
        <end position="753"/>
    </location>
</feature>
<feature type="strand" evidence="23">
    <location>
        <begin position="757"/>
        <end position="761"/>
    </location>
</feature>
<feature type="helix" evidence="24">
    <location>
        <begin position="778"/>
        <end position="784"/>
    </location>
</feature>
<feature type="helix" evidence="23">
    <location>
        <begin position="796"/>
        <end position="800"/>
    </location>
</feature>
<feature type="helix" evidence="23">
    <location>
        <begin position="801"/>
        <end position="803"/>
    </location>
</feature>
<feature type="turn" evidence="23">
    <location>
        <begin position="812"/>
        <end position="815"/>
    </location>
</feature>
<feature type="strand" evidence="23">
    <location>
        <begin position="816"/>
        <end position="819"/>
    </location>
</feature>
<feature type="helix" evidence="23">
    <location>
        <begin position="826"/>
        <end position="830"/>
    </location>
</feature>
<feature type="helix" evidence="23">
    <location>
        <begin position="841"/>
        <end position="863"/>
    </location>
</feature>
<feature type="helix" evidence="23">
    <location>
        <begin position="865"/>
        <end position="868"/>
    </location>
</feature>
<feature type="strand" evidence="23">
    <location>
        <begin position="872"/>
        <end position="874"/>
    </location>
</feature>
<feature type="helix" evidence="23">
    <location>
        <begin position="877"/>
        <end position="890"/>
    </location>
</feature>
<feature type="helix" evidence="23">
    <location>
        <begin position="898"/>
        <end position="915"/>
    </location>
</feature>
<feature type="strand" evidence="23">
    <location>
        <begin position="918"/>
        <end position="921"/>
    </location>
</feature>
<feature type="strand" evidence="23">
    <location>
        <begin position="933"/>
        <end position="935"/>
    </location>
</feature>
<comment type="function">
    <text evidence="6 7 8 9 10 11 12">Component of the C9orf72-SMCR8 complex, a complex that has guanine nucleotide exchange factor (GEF) activity and regulates autophagy (PubMed:20562859, PubMed:27103069, PubMed:27193190, PubMed:27559131, PubMed:27617292, PubMed:28195531, PubMed:32303654). In the complex, C9orf72 and SMCR8 probably constitute the catalytic subunits that promote the exchange of GDP to GTP, converting inactive GDP-bound RAB8A and RAB39B into their active GTP-bound form, thereby promoting autophagosome maturation (PubMed:20562859, PubMed:27103069, PubMed:27617292, PubMed:28195531). The C9orf72-SMCR8 complex also acts as a negative regulator of autophagy initiation by interacting with the ULK1/ATG1 kinase complex and inhibiting its protein kinase activity (PubMed:27617292, PubMed:28195531). As part of the C9orf72-SMCR8 complex, stimulates RAB8A and RAB11A GTPase activity in vitro (PubMed:32303654). Acts as a regulator of mTORC1 signaling by promoting phosphorylation of mTORC1 substrates (PubMed:27559131, PubMed:28195531). In addition to its activity in the cytoplasm within the C9orf72-SMCR8 complex, SMCR8 also localizes in the nucleus, where it associates with chromatin and negatively regulates expression of suppresses ULK1 and WIPI2 genes (PubMed:28195531).</text>
</comment>
<comment type="subunit">
    <text evidence="1 7 8 9 10 11 12">Component of the C9orf72-SMCR8 complex, at least composed of C9orf72, SMCR8 and WDR41 (PubMed:27103069, PubMed:27193190, PubMed:27559131, PubMed:27617292, PubMed:28195531). The complex is formed of two protomers, each individually consisting of one molecule each of C9orf72, SMCR8 and WDR41 (PubMed:32303654). The protomers homodimerize via an interaction between C9orf72 (via C-terminus) and SMCR8 (via N-terminus) (PubMed:32303654). Within each protomer SMCR8 (via DENN domain) acts as a bridging protein between WDR41 (via C-terminus and N-terminus) and C9orf72 (via C-terminus) (PubMed:32303654). The C9orf72-SMCR8 complex associates with the ULK1/ATG1 kinase complex (PubMed:28195531). Interacts with C9orf72; the interaction is direct (PubMed:27559131, PubMed:27617292, PubMed:32303654). Interacts with DLG4/PSD-95 (By similarity).</text>
</comment>
<comment type="interaction">
    <interactant intactId="EBI-2961718">
        <id>Q8TEV9</id>
    </interactant>
    <interactant intactId="EBI-2961725">
        <id>Q96LT7</id>
        <label>C9orf72</label>
    </interactant>
    <organismsDiffer>false</organismsDiffer>
    <experiments>11</experiments>
</comment>
<comment type="interaction">
    <interactant intactId="EBI-2961718">
        <id>Q8TEV9</id>
    </interactant>
    <interactant intactId="EBI-16693635">
        <id>Q96LT7-1</id>
        <label>C9orf72</label>
    </interactant>
    <organismsDiffer>false</organismsDiffer>
    <experiments>5</experiments>
</comment>
<comment type="subcellular location">
    <subcellularLocation>
        <location evidence="8 11">Cytoplasm</location>
    </subcellularLocation>
    <subcellularLocation>
        <location evidence="11">Nucleus</location>
    </subcellularLocation>
    <subcellularLocation>
        <location evidence="1">Presynapse</location>
    </subcellularLocation>
    <subcellularLocation>
        <location evidence="1">Postsynapse</location>
    </subcellularLocation>
    <text evidence="11">Localizes mainly in the cytoplasm.</text>
</comment>
<comment type="alternative products">
    <event type="alternative splicing"/>
    <isoform>
        <id>Q8TEV9-1</id>
        <name>1</name>
        <sequence type="displayed"/>
    </isoform>
    <isoform>
        <id>Q8TEV9-2</id>
        <name>2</name>
        <sequence type="described" ref="VSP_025487"/>
    </isoform>
</comment>
<comment type="tissue specificity">
    <text evidence="4">Expressed in all tissues tested.</text>
</comment>
<comment type="PTM">
    <text evidence="7">Phosphorylation by TBK1 is required to promote autophagosome maturation (PubMed:27103069). Phosphorylated by ULK1 (PubMed:27103069).</text>
</comment>
<comment type="similarity">
    <text evidence="14">Belongs to the SMCR8 family.</text>
</comment>
<gene>
    <name evidence="16" type="primary">SMCR8</name>
</gene>
<sequence length="937" mass="105022">MISAPDVVAFTKEEEYEEEPYNEPALPEEYSVPLFPFASQGANPWSKLSGAKFSRDFILISEFSEQVGPQPLLTIPNDTKVFGTFDLNYFSLRIMSVDYQASFVGHPPGSAYPKLNFVEDSKVVLGDSKEGAFAYVHHLTLYDLEARGFVRPFCMAYISADQHKIMQQFQELSAEFSRASECLKTGNRKAFAGELEKKLKDLDYTRTVLHTETEIQKKANDKGFYSSQAIEKANELASVEKSIIEHQDLLKQIRSYPHRKLKGHDLCPGEMEHIQDQASQASTTSNPDESADTDLYTCRPAYTPKLIKAKSTKCFDKKLKTLEELCDTEYFTQTLAQLSHIEHMFRGDLCYLLTSQIDRALLKQQHITNFLFEDFVEVDDRMVEKQESIPSKPSQDRPPSSSLEECPIPKVLISVGSYKSSVESVLIKMEQELGDEEYKEVEVTELSSFDPQENLDYLDMDMKGSISSGESIEVLGTEKSTSVLSKSDSQASLTVPLSPQVVRSKAVSHRTISEDSIEVLSTCPSEALIPDDFKASYPSAINEEESYPDGNEGAIRFQASISPPELGETEEGSIENTPSQIDSSCCIGKESDGQLVLPSTPAHTHSDEDGVVSSPPQRHRQKDQGFRVDFSVENANPSSRDNSCEGFPAYELDPSHLLASRDISKTSLDNYSDTTSYVSSVASTSSDRIPSAYPAGLSSDRHKKRAGQNALKFIRQYPFAHPAIYSLLSGRTLVVLGEDEAIVRKLVTALAIFVPSYGCYAKPVKHWASSPLHIMDFQKWKLIGLQRVASPAGAGTLHALSRYSRYTSILDLDNKTLRCPLYRGTLVPRLADHRTQIKRGSTYYLHVQSMLTQLCSKAFLYTFCHHLHLPTHDKETEELVASRQMSFLKLTLGLVNEDVRVVQYLAELLKLHYMQESPGTSHPMLRFDYVPSFLYKI</sequence>
<reference key="1">
    <citation type="journal article" date="2002" name="Genome Res.">
        <title>Genes in a refined Smith-Magenis syndrome critical deletion interval on chromosome 17p11.2 and the syntenic region of the mouse.</title>
        <authorList>
            <person name="Bi W."/>
            <person name="Yan J."/>
            <person name="Stankiewicz P."/>
            <person name="Park S.-S."/>
            <person name="Walz K."/>
            <person name="Boerkoel C.F."/>
            <person name="Potocki L."/>
            <person name="Shaffer L.G."/>
            <person name="Devriendt K."/>
            <person name="Nowaczyk M.J.M."/>
            <person name="Inoue K."/>
            <person name="Lupski J.R."/>
        </authorList>
    </citation>
    <scope>NUCLEOTIDE SEQUENCE [MRNA] (ISOFORM 2)</scope>
    <scope>TISSUE SPECIFICITY</scope>
</reference>
<reference key="2">
    <citation type="journal article" date="2004" name="Genome Res.">
        <title>The status, quality, and expansion of the NIH full-length cDNA project: the Mammalian Gene Collection (MGC).</title>
        <authorList>
            <consortium name="The MGC Project Team"/>
        </authorList>
    </citation>
    <scope>NUCLEOTIDE SEQUENCE [LARGE SCALE MRNA] (ISOFORM 1)</scope>
    <scope>VARIANTS LEU-524 AND HIS-556</scope>
    <source>
        <tissue>Eye</tissue>
    </source>
</reference>
<reference key="3">
    <citation type="journal article" date="2006" name="Cell">
        <title>Global, in vivo, and site-specific phosphorylation dynamics in signaling networks.</title>
        <authorList>
            <person name="Olsen J.V."/>
            <person name="Blagoev B."/>
            <person name="Gnad F."/>
            <person name="Macek B."/>
            <person name="Kumar C."/>
            <person name="Mortensen P."/>
            <person name="Mann M."/>
        </authorList>
    </citation>
    <scope>PHOSPHORYLATION [LARGE SCALE ANALYSIS] AT SER-471</scope>
    <scope>IDENTIFICATION BY MASS SPECTROMETRY [LARGE SCALE ANALYSIS]</scope>
    <source>
        <tissue>Cervix carcinoma</tissue>
    </source>
</reference>
<reference key="4">
    <citation type="journal article" date="2008" name="Proc. Natl. Acad. Sci. U.S.A.">
        <title>A quantitative atlas of mitotic phosphorylation.</title>
        <authorList>
            <person name="Dephoure N."/>
            <person name="Zhou C."/>
            <person name="Villen J."/>
            <person name="Beausoleil S.A."/>
            <person name="Bakalarski C.E."/>
            <person name="Elledge S.J."/>
            <person name="Gygi S.P."/>
        </authorList>
    </citation>
    <scope>PHOSPHORYLATION [LARGE SCALE ANALYSIS] AT SER-498</scope>
    <scope>IDENTIFICATION BY MASS SPECTROMETRY [LARGE SCALE ANALYSIS]</scope>
    <source>
        <tissue>Cervix carcinoma</tissue>
    </source>
</reference>
<reference key="5">
    <citation type="journal article" date="2009" name="Anal. Chem.">
        <title>Lys-N and trypsin cover complementary parts of the phosphoproteome in a refined SCX-based approach.</title>
        <authorList>
            <person name="Gauci S."/>
            <person name="Helbig A.O."/>
            <person name="Slijper M."/>
            <person name="Krijgsveld J."/>
            <person name="Heck A.J."/>
            <person name="Mohammed S."/>
        </authorList>
    </citation>
    <scope>IDENTIFICATION BY MASS SPECTROMETRY [LARGE SCALE ANALYSIS]</scope>
</reference>
<reference key="6">
    <citation type="journal article" date="2009" name="Sci. Signal.">
        <title>Quantitative phosphoproteomic analysis of T cell receptor signaling reveals system-wide modulation of protein-protein interactions.</title>
        <authorList>
            <person name="Mayya V."/>
            <person name="Lundgren D.H."/>
            <person name="Hwang S.-I."/>
            <person name="Rezaul K."/>
            <person name="Wu L."/>
            <person name="Eng J.K."/>
            <person name="Rodionov V."/>
            <person name="Han D.K."/>
        </authorList>
    </citation>
    <scope>PHOSPHORYLATION [LARGE SCALE ANALYSIS] AT SER-498</scope>
    <scope>IDENTIFICATION BY MASS SPECTROMETRY [LARGE SCALE ANALYSIS]</scope>
    <source>
        <tissue>Leukemic T-cell</tissue>
    </source>
</reference>
<reference key="7">
    <citation type="journal article" date="2010" name="Nature">
        <title>Network organization of the human autophagy system.</title>
        <authorList>
            <person name="Behrends C."/>
            <person name="Sowa M.E."/>
            <person name="Gygi S.P."/>
            <person name="Harper J.W."/>
        </authorList>
    </citation>
    <scope>FUNCTION</scope>
</reference>
<reference key="8">
    <citation type="journal article" date="2011" name="Sci. Signal.">
        <title>System-wide temporal characterization of the proteome and phosphoproteome of human embryonic stem cell differentiation.</title>
        <authorList>
            <person name="Rigbolt K.T."/>
            <person name="Prokhorova T.A."/>
            <person name="Akimov V."/>
            <person name="Henningsen J."/>
            <person name="Johansen P.T."/>
            <person name="Kratchmarova I."/>
            <person name="Kassem M."/>
            <person name="Mann M."/>
            <person name="Olsen J.V."/>
            <person name="Blagoev B."/>
        </authorList>
    </citation>
    <scope>PHOSPHORYLATION [LARGE SCALE ANALYSIS] AT SER-468; SER-471; SER-492 AND SER-498</scope>
    <scope>IDENTIFICATION BY MASS SPECTROMETRY [LARGE SCALE ANALYSIS]</scope>
</reference>
<reference key="9">
    <citation type="journal article" date="2012" name="Front. Genet.">
        <title>Discovery of novel DENN proteins: implications for the evolution of eukaryotic intracellular membrane structures and human disease.</title>
        <authorList>
            <person name="Zhang D."/>
            <person name="Iyer L.M."/>
            <person name="He F."/>
            <person name="Aravind L."/>
        </authorList>
    </citation>
    <scope>DOMAIN ARCHITECTURE</scope>
</reference>
<reference key="10">
    <citation type="journal article" date="2013" name="J. Proteome Res.">
        <title>Toward a comprehensive characterization of a human cancer cell phosphoproteome.</title>
        <authorList>
            <person name="Zhou H."/>
            <person name="Di Palma S."/>
            <person name="Preisinger C."/>
            <person name="Peng M."/>
            <person name="Polat A.N."/>
            <person name="Heck A.J."/>
            <person name="Mohammed S."/>
        </authorList>
    </citation>
    <scope>PHOSPHORYLATION [LARGE SCALE ANALYSIS] AT SER-417; SER-489; SER-492; SER-498 AND SER-790</scope>
    <scope>IDENTIFICATION BY MASS SPECTROMETRY [LARGE SCALE ANALYSIS]</scope>
    <source>
        <tissue>Cervix carcinoma</tissue>
        <tissue>Erythroleukemia</tissue>
    </source>
</reference>
<reference key="11">
    <citation type="journal article" date="2016" name="Acta Neuropathol. Commun.">
        <title>The ALS/FTLD associated protein C9orf72 associates with SMCR8 and WDR41 to regulate the autophagy-lysosome pathway.</title>
        <authorList>
            <person name="Sullivan P.M."/>
            <person name="Zhou X."/>
            <person name="Robins A.M."/>
            <person name="Paushter D.H."/>
            <person name="Kim D."/>
            <person name="Smolka M.B."/>
            <person name="Hu F."/>
        </authorList>
    </citation>
    <scope>FUNCTION</scope>
    <scope>IDENTIFICATION IN THE C9ORF72-SMCR8 COMPLEX</scope>
    <scope>SUBCELLULAR LOCATION</scope>
</reference>
<reference key="12">
    <citation type="journal article" date="2016" name="EMBO J.">
        <title>Loss of C9ORF72 impairs autophagy and synergizes with polyQ Ataxin-2 to induce motor neuron dysfunction and cell death.</title>
        <authorList>
            <person name="Sellier C."/>
            <person name="Campanari M.L."/>
            <person name="Julie Corbier C."/>
            <person name="Gaucherot A."/>
            <person name="Kolb-Cheynel I."/>
            <person name="Oulad-Abdelghani M."/>
            <person name="Ruffenach F."/>
            <person name="Page A."/>
            <person name="Ciura S."/>
            <person name="Kabashi E."/>
            <person name="Charlet-Berguerand N."/>
        </authorList>
    </citation>
    <scope>FUNCTION</scope>
    <scope>IDENTIFICATION IN THE C9ORF72-SMCR8 COMPLEX</scope>
    <scope>PHOSPHORYLATION AT SER-402 AND THR-796</scope>
    <scope>MUTAGENESIS OF SER-402 AND THR-796</scope>
</reference>
<reference key="13">
    <citation type="journal article" date="2016" name="Mol. Biol. Cell">
        <title>C9orf72 binds SMCR8, localizes to lysosomes, and regulates mTORC1 signaling.</title>
        <authorList>
            <person name="Amick J."/>
            <person name="Roczniak-Ferguson A."/>
            <person name="Ferguson S.M."/>
        </authorList>
    </citation>
    <scope>FUNCTION</scope>
    <scope>IDENTIFICATION IN THE C9ORF72-SMCR8 COMPLEX</scope>
    <scope>INTERACTION WITH C9ORF72</scope>
</reference>
<reference key="14">
    <citation type="journal article" date="2016" name="Sci. Adv.">
        <title>A C9ORF72/SMCR8-containing complex regulates ULK1 and plays a dual role in autophagy.</title>
        <authorList>
            <person name="Yang M."/>
            <person name="Liang C."/>
            <person name="Swaminathan K."/>
            <person name="Herrlinger S."/>
            <person name="Lai F."/>
            <person name="Shiekhattar R."/>
            <person name="Chen J.F."/>
        </authorList>
    </citation>
    <scope>FUNCTION</scope>
    <scope>IDENTIFICATION IN THE C9ORF72-SMCR8 COMPLEX</scope>
    <scope>INTERACTION WITH C9ORF72</scope>
</reference>
<reference key="15">
    <citation type="journal article" date="2017" name="Elife">
        <title>Multiplex image-based autophagy RNAi screening identifies SMCR8 as ULK1 kinase activity and gene expression regulator.</title>
        <authorList>
            <person name="Jung J."/>
            <person name="Nayak A."/>
            <person name="Schaeffer V."/>
            <person name="Starzetz T."/>
            <person name="Kirsch A.K."/>
            <person name="Mueller S."/>
            <person name="Dikic I."/>
            <person name="Mittelbronn M."/>
            <person name="Behrends C."/>
        </authorList>
    </citation>
    <scope>FUNCTION</scope>
    <scope>IDENTIFICATION IN THE C9ORF72-SMCR8 COMPLEX</scope>
    <scope>SUBCELLULAR LOCATION</scope>
</reference>
<reference evidence="17" key="16">
    <citation type="journal article" date="2020" name="Proc. Natl. Acad. Sci. U.S.A.">
        <title>Cryo-EM structure of C9ORF72-SMCR8-WDR41 reveals the role as a GAP for Rab8a and Rab11a.</title>
        <authorList>
            <person name="Tang D."/>
            <person name="Sheng J."/>
            <person name="Xu L."/>
            <person name="Zhan X."/>
            <person name="Liu J."/>
            <person name="Jiang H."/>
            <person name="Shu X."/>
            <person name="Liu X."/>
            <person name="Zhang T."/>
            <person name="Jiang L."/>
            <person name="Zhou C."/>
            <person name="Li W."/>
            <person name="Cheng W."/>
            <person name="Li Z."/>
            <person name="Wang K."/>
            <person name="Lu K."/>
            <person name="Yan C."/>
            <person name="Qi S."/>
        </authorList>
    </citation>
    <scope>STRUCTURE BY ELECTRON MICROSCOPY (3.20 ANGSTROMS) IN THE C9ORF72-SMCR8 COMPLEX</scope>
    <scope>FUNCTION</scope>
    <scope>INTERACTION WITH C9ORF72</scope>
    <scope>MUTAGENESIS OF ARG-147</scope>
</reference>
<keyword id="KW-0002">3D-structure</keyword>
<keyword id="KW-0025">Alternative splicing</keyword>
<keyword id="KW-0072">Autophagy</keyword>
<keyword id="KW-0966">Cell projection</keyword>
<keyword id="KW-0963">Cytoplasm</keyword>
<keyword id="KW-0344">Guanine-nucleotide releasing factor</keyword>
<keyword id="KW-0539">Nucleus</keyword>
<keyword id="KW-0597">Phosphoprotein</keyword>
<keyword id="KW-1267">Proteomics identification</keyword>
<keyword id="KW-1185">Reference proteome</keyword>
<keyword id="KW-0770">Synapse</keyword>
<keyword id="KW-0804">Transcription</keyword>
<keyword id="KW-0805">Transcription regulation</keyword>
<dbReference type="EMBL" id="AF467440">
    <property type="protein sequence ID" value="AAL78337.1"/>
    <property type="molecule type" value="mRNA"/>
</dbReference>
<dbReference type="EMBL" id="BC001018">
    <property type="protein sequence ID" value="AAH01018.1"/>
    <property type="status" value="ALT_TERM"/>
    <property type="molecule type" value="mRNA"/>
</dbReference>
<dbReference type="EMBL" id="BC101116">
    <property type="protein sequence ID" value="AAI01117.1"/>
    <property type="molecule type" value="mRNA"/>
</dbReference>
<dbReference type="EMBL" id="BC101117">
    <property type="protein sequence ID" value="AAI01118.1"/>
    <property type="molecule type" value="mRNA"/>
</dbReference>
<dbReference type="EMBL" id="BC014179">
    <property type="protein sequence ID" value="AAH14179.1"/>
    <property type="status" value="ALT_TERM"/>
    <property type="molecule type" value="mRNA"/>
</dbReference>
<dbReference type="EMBL" id="BC142680">
    <property type="protein sequence ID" value="AAI42681.1"/>
    <property type="molecule type" value="mRNA"/>
</dbReference>
<dbReference type="CCDS" id="CCDS11195.2">
    <molecule id="Q8TEV9-1"/>
</dbReference>
<dbReference type="RefSeq" id="NP_658988.2">
    <molecule id="Q8TEV9-1"/>
    <property type="nucleotide sequence ID" value="NM_144775.3"/>
</dbReference>
<dbReference type="PDB" id="6LT0">
    <property type="method" value="EM"/>
    <property type="resolution" value="3.20 A"/>
    <property type="chains" value="B/E=1-937"/>
</dbReference>
<dbReference type="PDB" id="6V4U">
    <property type="method" value="EM"/>
    <property type="resolution" value="3.80 A"/>
    <property type="chains" value="B=1-937"/>
</dbReference>
<dbReference type="PDB" id="7EL6">
    <property type="method" value="X-ray"/>
    <property type="resolution" value="2.80 A"/>
    <property type="chains" value="A/B=778-787"/>
</dbReference>
<dbReference type="PDB" id="7MGE">
    <property type="method" value="EM"/>
    <property type="resolution" value="3.94 A"/>
    <property type="chains" value="B=1-937"/>
</dbReference>
<dbReference type="PDB" id="7O2W">
    <property type="method" value="EM"/>
    <property type="chains" value="B=1-439, B=620-937"/>
</dbReference>
<dbReference type="PDBsum" id="6LT0"/>
<dbReference type="PDBsum" id="6V4U"/>
<dbReference type="PDBsum" id="7EL6"/>
<dbReference type="PDBsum" id="7MGE"/>
<dbReference type="PDBsum" id="7O2W"/>
<dbReference type="EMDB" id="EMD-0966"/>
<dbReference type="EMDB" id="EMD-21048"/>
<dbReference type="EMDB" id="EMD-23827"/>
<dbReference type="SMR" id="Q8TEV9"/>
<dbReference type="BioGRID" id="126704">
    <property type="interactions" value="130"/>
</dbReference>
<dbReference type="ComplexPortal" id="CPX-3961">
    <property type="entry name" value="C9orf72-SMCR8 complex"/>
</dbReference>
<dbReference type="CORUM" id="Q8TEV9"/>
<dbReference type="FunCoup" id="Q8TEV9">
    <property type="interactions" value="2226"/>
</dbReference>
<dbReference type="IntAct" id="Q8TEV9">
    <property type="interactions" value="39"/>
</dbReference>
<dbReference type="MINT" id="Q8TEV9"/>
<dbReference type="STRING" id="9606.ENSP00000385025"/>
<dbReference type="GlyCosmos" id="Q8TEV9">
    <property type="glycosylation" value="1 site, 1 glycan"/>
</dbReference>
<dbReference type="GlyGen" id="Q8TEV9">
    <property type="glycosylation" value="3 sites, 1 N-linked glycan (1 site), 1 O-linked glycan (2 sites)"/>
</dbReference>
<dbReference type="iPTMnet" id="Q8TEV9"/>
<dbReference type="PhosphoSitePlus" id="Q8TEV9"/>
<dbReference type="BioMuta" id="SMCR8"/>
<dbReference type="DMDM" id="147733168"/>
<dbReference type="jPOST" id="Q8TEV9"/>
<dbReference type="MassIVE" id="Q8TEV9"/>
<dbReference type="PaxDb" id="9606-ENSP00000385025"/>
<dbReference type="PeptideAtlas" id="Q8TEV9"/>
<dbReference type="ProteomicsDB" id="74504">
    <molecule id="Q8TEV9-1"/>
</dbReference>
<dbReference type="ProteomicsDB" id="74505">
    <molecule id="Q8TEV9-2"/>
</dbReference>
<dbReference type="Pumba" id="Q8TEV9"/>
<dbReference type="Antibodypedia" id="13526">
    <property type="antibodies" value="37 antibodies from 15 providers"/>
</dbReference>
<dbReference type="DNASU" id="140775"/>
<dbReference type="Ensembl" id="ENST00000406438.5">
    <molecule id="Q8TEV9-1"/>
    <property type="protein sequence ID" value="ENSP00000385025.3"/>
    <property type="gene ID" value="ENSG00000176994.11"/>
</dbReference>
<dbReference type="Ensembl" id="ENST00000639332.2">
    <molecule id="Q8TEV9-1"/>
    <property type="protein sequence ID" value="ENSP00000492062.1"/>
    <property type="gene ID" value="ENSG00000283741.2"/>
</dbReference>
<dbReference type="GeneID" id="140775"/>
<dbReference type="KEGG" id="hsa:140775"/>
<dbReference type="MANE-Select" id="ENST00000406438.5">
    <property type="protein sequence ID" value="ENSP00000385025.3"/>
    <property type="RefSeq nucleotide sequence ID" value="NM_144775.3"/>
    <property type="RefSeq protein sequence ID" value="NP_658988.2"/>
</dbReference>
<dbReference type="UCSC" id="uc002gsy.5">
    <molecule id="Q8TEV9-1"/>
    <property type="organism name" value="human"/>
</dbReference>
<dbReference type="AGR" id="HGNC:17921"/>
<dbReference type="CTD" id="140775"/>
<dbReference type="DisGeNET" id="140775"/>
<dbReference type="GeneCards" id="SMCR8"/>
<dbReference type="HGNC" id="HGNC:17921">
    <property type="gene designation" value="SMCR8"/>
</dbReference>
<dbReference type="HPA" id="ENSG00000176994">
    <property type="expression patterns" value="Low tissue specificity"/>
</dbReference>
<dbReference type="neXtProt" id="NX_Q8TEV9"/>
<dbReference type="OpenTargets" id="ENSG00000176994"/>
<dbReference type="PharmGKB" id="PA38266"/>
<dbReference type="VEuPathDB" id="HostDB:ENSG00000176994"/>
<dbReference type="eggNOG" id="ENOG502QSW2">
    <property type="taxonomic scope" value="Eukaryota"/>
</dbReference>
<dbReference type="GeneTree" id="ENSGT00390000010052"/>
<dbReference type="HOGENOM" id="CLU_013891_0_0_1"/>
<dbReference type="InParanoid" id="Q8TEV9"/>
<dbReference type="OMA" id="KPVKHWV"/>
<dbReference type="OrthoDB" id="2289278at2759"/>
<dbReference type="PAN-GO" id="Q8TEV9">
    <property type="GO annotations" value="1 GO annotation based on evolutionary models"/>
</dbReference>
<dbReference type="PhylomeDB" id="Q8TEV9"/>
<dbReference type="TreeFam" id="TF330880"/>
<dbReference type="PathwayCommons" id="Q8TEV9"/>
<dbReference type="SignaLink" id="Q8TEV9"/>
<dbReference type="SIGNOR" id="Q8TEV9"/>
<dbReference type="BioGRID-ORCS" id="140775">
    <property type="hits" value="16 hits in 1157 CRISPR screens"/>
</dbReference>
<dbReference type="ChiTaRS" id="SMCR8">
    <property type="organism name" value="human"/>
</dbReference>
<dbReference type="GenomeRNAi" id="140775"/>
<dbReference type="Pharos" id="Q8TEV9">
    <property type="development level" value="Tbio"/>
</dbReference>
<dbReference type="PRO" id="PR:Q8TEV9"/>
<dbReference type="Proteomes" id="UP000005640">
    <property type="component" value="Chromosome 17"/>
</dbReference>
<dbReference type="RNAct" id="Q8TEV9">
    <property type="molecule type" value="protein"/>
</dbReference>
<dbReference type="Bgee" id="ENSG00000176994">
    <property type="expression patterns" value="Expressed in monocyte and 107 other cell types or tissues"/>
</dbReference>
<dbReference type="GO" id="GO:1990316">
    <property type="term" value="C:Atg1/ULK1 kinase complex"/>
    <property type="evidence" value="ECO:0000314"/>
    <property type="project" value="HGNC"/>
</dbReference>
<dbReference type="GO" id="GO:0042995">
    <property type="term" value="C:cell projection"/>
    <property type="evidence" value="ECO:0007669"/>
    <property type="project" value="UniProtKB-KW"/>
</dbReference>
<dbReference type="GO" id="GO:0000785">
    <property type="term" value="C:chromatin"/>
    <property type="evidence" value="ECO:0000314"/>
    <property type="project" value="HGNC"/>
</dbReference>
<dbReference type="GO" id="GO:0005737">
    <property type="term" value="C:cytoplasm"/>
    <property type="evidence" value="ECO:0000314"/>
    <property type="project" value="UniProtKB"/>
</dbReference>
<dbReference type="GO" id="GO:0032045">
    <property type="term" value="C:guanyl-nucleotide exchange factor complex"/>
    <property type="evidence" value="ECO:0000314"/>
    <property type="project" value="HGNC"/>
</dbReference>
<dbReference type="GO" id="GO:0005654">
    <property type="term" value="C:nucleoplasm"/>
    <property type="evidence" value="ECO:0000314"/>
    <property type="project" value="HGNC"/>
</dbReference>
<dbReference type="GO" id="GO:0098794">
    <property type="term" value="C:postsynapse"/>
    <property type="evidence" value="ECO:0000250"/>
    <property type="project" value="UniProtKB"/>
</dbReference>
<dbReference type="GO" id="GO:0098793">
    <property type="term" value="C:presynapse"/>
    <property type="evidence" value="ECO:0000250"/>
    <property type="project" value="UniProtKB"/>
</dbReference>
<dbReference type="GO" id="GO:0005096">
    <property type="term" value="F:GTPase activator activity"/>
    <property type="evidence" value="ECO:0000315"/>
    <property type="project" value="UniProtKB"/>
</dbReference>
<dbReference type="GO" id="GO:0005085">
    <property type="term" value="F:guanyl-nucleotide exchange factor activity"/>
    <property type="evidence" value="ECO:0007669"/>
    <property type="project" value="UniProtKB-KW"/>
</dbReference>
<dbReference type="GO" id="GO:0019901">
    <property type="term" value="F:protein kinase binding"/>
    <property type="evidence" value="ECO:0000353"/>
    <property type="project" value="UniProtKB"/>
</dbReference>
<dbReference type="GO" id="GO:0004860">
    <property type="term" value="F:protein kinase inhibitor activity"/>
    <property type="evidence" value="ECO:0000315"/>
    <property type="project" value="HGNC"/>
</dbReference>
<dbReference type="GO" id="GO:0006914">
    <property type="term" value="P:autophagy"/>
    <property type="evidence" value="ECO:0007669"/>
    <property type="project" value="UniProtKB-KW"/>
</dbReference>
<dbReference type="GO" id="GO:1902902">
    <property type="term" value="P:negative regulation of autophagosome assembly"/>
    <property type="evidence" value="ECO:0000315"/>
    <property type="project" value="HGNC"/>
</dbReference>
<dbReference type="GO" id="GO:0045920">
    <property type="term" value="P:negative regulation of exocytosis"/>
    <property type="evidence" value="ECO:0000303"/>
    <property type="project" value="ComplexPortal"/>
</dbReference>
<dbReference type="GO" id="GO:0010629">
    <property type="term" value="P:negative regulation of gene expression"/>
    <property type="evidence" value="ECO:0000315"/>
    <property type="project" value="HGNC"/>
</dbReference>
<dbReference type="GO" id="GO:0050777">
    <property type="term" value="P:negative regulation of immune response"/>
    <property type="evidence" value="ECO:0000303"/>
    <property type="project" value="ComplexPortal"/>
</dbReference>
<dbReference type="GO" id="GO:0016242">
    <property type="term" value="P:negative regulation of macroautophagy"/>
    <property type="evidence" value="ECO:0000315"/>
    <property type="project" value="HGNC"/>
</dbReference>
<dbReference type="GO" id="GO:1901098">
    <property type="term" value="P:positive regulation of autophagosome maturation"/>
    <property type="evidence" value="ECO:0000315"/>
    <property type="project" value="HGNC"/>
</dbReference>
<dbReference type="GO" id="GO:0032008">
    <property type="term" value="P:positive regulation of TOR signaling"/>
    <property type="evidence" value="ECO:0000315"/>
    <property type="project" value="HGNC"/>
</dbReference>
<dbReference type="GO" id="GO:0010506">
    <property type="term" value="P:regulation of autophagy"/>
    <property type="evidence" value="ECO:0000315"/>
    <property type="project" value="UniProtKB"/>
</dbReference>
<dbReference type="GO" id="GO:1903432">
    <property type="term" value="P:regulation of TORC1 signaling"/>
    <property type="evidence" value="ECO:0000315"/>
    <property type="project" value="UniProtKB"/>
</dbReference>
<dbReference type="InterPro" id="IPR037521">
    <property type="entry name" value="FLCN/SMCR8_DENN"/>
</dbReference>
<dbReference type="InterPro" id="IPR037520">
    <property type="entry name" value="Folliculin/SMCR8_longin"/>
</dbReference>
<dbReference type="PANTHER" id="PTHR31334:SF1">
    <property type="entry name" value="GUANINE NUCLEOTIDE EXCHANGE PROTEIN SMCR8"/>
    <property type="match status" value="1"/>
</dbReference>
<dbReference type="PANTHER" id="PTHR31334">
    <property type="entry name" value="SMITH-MAGENIS SYNDROME REGION GENE 8 PROTEIN"/>
    <property type="match status" value="1"/>
</dbReference>
<dbReference type="Pfam" id="PF11704">
    <property type="entry name" value="Folliculin"/>
    <property type="match status" value="1"/>
</dbReference>
<dbReference type="PROSITE" id="PS51834">
    <property type="entry name" value="DENN_FLCN_SMCR8"/>
    <property type="match status" value="1"/>
</dbReference>
<organism>
    <name type="scientific">Homo sapiens</name>
    <name type="common">Human</name>
    <dbReference type="NCBI Taxonomy" id="9606"/>
    <lineage>
        <taxon>Eukaryota</taxon>
        <taxon>Metazoa</taxon>
        <taxon>Chordata</taxon>
        <taxon>Craniata</taxon>
        <taxon>Vertebrata</taxon>
        <taxon>Euteleostomi</taxon>
        <taxon>Mammalia</taxon>
        <taxon>Eutheria</taxon>
        <taxon>Euarchontoglires</taxon>
        <taxon>Primates</taxon>
        <taxon>Haplorrhini</taxon>
        <taxon>Catarrhini</taxon>
        <taxon>Hominidae</taxon>
        <taxon>Homo</taxon>
    </lineage>
</organism>
<accession>Q8TEV9</accession>
<accession>A5PKZ5</accession>
<accession>Q3ZCN0</accession>
<accession>Q6PJL3</accession>